<accession>Q95QJ7</accession>
<accession>P34408</accession>
<proteinExistence type="evidence at protein level"/>
<dbReference type="EMBL" id="FO080222">
    <property type="protein sequence ID" value="CCD62140.1"/>
    <property type="molecule type" value="Genomic_DNA"/>
</dbReference>
<dbReference type="PIR" id="S44636">
    <property type="entry name" value="S44636"/>
</dbReference>
<dbReference type="RefSeq" id="NP_498900.1">
    <property type="nucleotide sequence ID" value="NM_066499.5"/>
</dbReference>
<dbReference type="SMR" id="Q95QJ7"/>
<dbReference type="BioGRID" id="41414">
    <property type="interactions" value="13"/>
</dbReference>
<dbReference type="ComplexPortal" id="CPX-4027">
    <property type="entry name" value="gpr-1-gpr-2-lin-5 complex"/>
</dbReference>
<dbReference type="DIP" id="DIP-26900N"/>
<dbReference type="FunCoup" id="Q95QJ7">
    <property type="interactions" value="1391"/>
</dbReference>
<dbReference type="IntAct" id="Q95QJ7">
    <property type="interactions" value="6"/>
</dbReference>
<dbReference type="STRING" id="6239.F22B7.13.1"/>
<dbReference type="PaxDb" id="6239-F22B7.13"/>
<dbReference type="PeptideAtlas" id="Q95QJ7"/>
<dbReference type="EnsemblMetazoa" id="F22B7.13.1">
    <property type="protein sequence ID" value="F22B7.13.1"/>
    <property type="gene ID" value="WBGene00001688"/>
</dbReference>
<dbReference type="GeneID" id="176210"/>
<dbReference type="KEGG" id="cel:CELE_F22B7.13"/>
<dbReference type="UCSC" id="F22B7.13">
    <property type="organism name" value="c. elegans"/>
</dbReference>
<dbReference type="AGR" id="WB:WBGene00001688"/>
<dbReference type="CTD" id="176210"/>
<dbReference type="WormBase" id="F22B7.13">
    <property type="protein sequence ID" value="CE24910"/>
    <property type="gene ID" value="WBGene00001688"/>
    <property type="gene designation" value="gpr-1"/>
</dbReference>
<dbReference type="eggNOG" id="ENOG502TGM6">
    <property type="taxonomic scope" value="Eukaryota"/>
</dbReference>
<dbReference type="GeneTree" id="ENSGT00970000196587"/>
<dbReference type="HOGENOM" id="CLU_517044_0_0_1"/>
<dbReference type="InParanoid" id="Q95QJ7"/>
<dbReference type="OMA" id="MNSRMDD"/>
<dbReference type="OrthoDB" id="5839175at2759"/>
<dbReference type="CD-CODE" id="1E117272">
    <property type="entry name" value="Centrosome"/>
</dbReference>
<dbReference type="PRO" id="PR:Q95QJ7"/>
<dbReference type="Proteomes" id="UP000001940">
    <property type="component" value="Chromosome III"/>
</dbReference>
<dbReference type="GO" id="GO:0005818">
    <property type="term" value="C:aster"/>
    <property type="evidence" value="ECO:0000314"/>
    <property type="project" value="WormBase"/>
</dbReference>
<dbReference type="GO" id="GO:0005938">
    <property type="term" value="C:cell cortex"/>
    <property type="evidence" value="ECO:0000314"/>
    <property type="project" value="WormBase"/>
</dbReference>
<dbReference type="GO" id="GO:0072686">
    <property type="term" value="C:mitotic spindle"/>
    <property type="evidence" value="ECO:0000314"/>
    <property type="project" value="ComplexPortal"/>
</dbReference>
<dbReference type="GO" id="GO:0001965">
    <property type="term" value="F:G-protein alpha-subunit binding"/>
    <property type="evidence" value="ECO:0000353"/>
    <property type="project" value="WormBase"/>
</dbReference>
<dbReference type="GO" id="GO:0005092">
    <property type="term" value="F:GDP-dissociation inhibitor activity"/>
    <property type="evidence" value="ECO:0000314"/>
    <property type="project" value="WormBase"/>
</dbReference>
<dbReference type="GO" id="GO:0051301">
    <property type="term" value="P:cell division"/>
    <property type="evidence" value="ECO:0007669"/>
    <property type="project" value="UniProtKB-KW"/>
</dbReference>
<dbReference type="GO" id="GO:0040001">
    <property type="term" value="P:establishment of mitotic spindle localization"/>
    <property type="evidence" value="ECO:0000303"/>
    <property type="project" value="ComplexPortal"/>
</dbReference>
<dbReference type="GO" id="GO:0000022">
    <property type="term" value="P:mitotic spindle elongation"/>
    <property type="evidence" value="ECO:0000303"/>
    <property type="project" value="ComplexPortal"/>
</dbReference>
<dbReference type="GO" id="GO:0007097">
    <property type="term" value="P:nuclear migration"/>
    <property type="evidence" value="ECO:0000303"/>
    <property type="project" value="ComplexPortal"/>
</dbReference>
<dbReference type="GO" id="GO:0008277">
    <property type="term" value="P:regulation of G protein-coupled receptor signaling pathway"/>
    <property type="evidence" value="ECO:0000303"/>
    <property type="project" value="ComplexPortal"/>
</dbReference>
<dbReference type="Gene3D" id="1.25.40.10">
    <property type="entry name" value="Tetratricopeptide repeat domain"/>
    <property type="match status" value="1"/>
</dbReference>
<dbReference type="InterPro" id="IPR003109">
    <property type="entry name" value="GoLoco_motif"/>
</dbReference>
<dbReference type="InterPro" id="IPR011990">
    <property type="entry name" value="TPR-like_helical_dom_sf"/>
</dbReference>
<dbReference type="SMART" id="SM00390">
    <property type="entry name" value="GoLoco"/>
    <property type="match status" value="1"/>
</dbReference>
<dbReference type="SUPFAM" id="SSF48452">
    <property type="entry name" value="TPR-like"/>
    <property type="match status" value="1"/>
</dbReference>
<dbReference type="PROSITE" id="PS50877">
    <property type="entry name" value="GOLOCO"/>
    <property type="match status" value="1"/>
</dbReference>
<keyword id="KW-0131">Cell cycle</keyword>
<keyword id="KW-0132">Cell division</keyword>
<keyword id="KW-0963">Cytoplasm</keyword>
<keyword id="KW-0206">Cytoskeleton</keyword>
<keyword id="KW-0498">Mitosis</keyword>
<keyword id="KW-1185">Reference proteome</keyword>
<comment type="function">
    <text evidence="3 4">In the 1-cell embryo, probably together with gpr-2, controls nuclear rotation and spindle elongation during mitosis (PubMed:14534135). Complex of gpr-1 and gpr-2, in association with lin-5, activates G-protein signaling to affect mitotic spindle force (PubMed:12730122). Polarity determinants (par genes) may regulate lin-5/gpr-1/gpr-2/goa-1 locally to create the asymmetric forces that drive spindle movement (PubMed:12730122).</text>
</comment>
<comment type="subunit">
    <text evidence="3">Interacts with gpr-1, lin-5 and GDP-bound goa-1.</text>
</comment>
<comment type="interaction">
    <interactant intactId="EBI-316069">
        <id>Q95QJ7</id>
    </interactant>
    <interactant intactId="EBI-1005005">
        <id>Q9N2V6</id>
        <label>gpa-16</label>
    </interactant>
    <organismsDiffer>false</organismsDiffer>
    <experiments>2</experiments>
</comment>
<comment type="interaction">
    <interactant intactId="EBI-316069">
        <id>Q95QJ7</id>
    </interactant>
    <interactant intactId="EBI-320537">
        <id>O01488</id>
        <label>kxd-1</label>
    </interactant>
    <organismsDiffer>false</organismsDiffer>
    <experiments>5</experiments>
</comment>
<comment type="subcellular location">
    <subcellularLocation>
        <location evidence="3 4">Cytoplasm</location>
        <location evidence="3 4">Cell cortex</location>
    </subcellularLocation>
    <subcellularLocation>
        <location evidence="3">Cytoplasm</location>
        <location evidence="3">Cytoskeleton</location>
        <location evidence="3">Spindle</location>
    </subcellularLocation>
    <text evidence="3 4 5">Located to the spindle and cell cortex when in complex with lin-5 and gpr-2 (PubMed:12730122). During early embryogenesis, cortical localization changes with the cell cycle. In one-cell embryo, uniform cortical localization from prophase to metaphase and posterior enrichment during anaphase. In the 2-cell embryo, uniform cortical localization in AB blastomere and posterior cortical enrichment in P1 blastomere during interphase. In P1, uniform cortical localization from prophase to early anaphase and then posterior cortical enrichment during late anaphase and telophase (PubMed:12730122, PubMed:14534135). Cortical localization and asymmetrical distribution is regulated by the csnk-1-mediated regulation of pkk-1 (PubMed:18694560). Enriched at the contact site between EMS and P2 from prophase to prometaphase (PubMed:14534135).</text>
</comment>
<comment type="disruption phenotype">
    <text evidence="4">Simultaneous RNAi-mediated knockdown of both gpr-1 and gpr-2 causes, in the 1-cell embryo, a decrease in nuclear and spindle movements during prophase, reduced asymmetric spindle elongation during anaphase and mispositioning of nuclei after cell division.</text>
</comment>
<name>GPR1_CAEEL</name>
<feature type="chain" id="PRO_0000087562" description="G-protein regulator 1">
    <location>
        <begin position="1"/>
        <end position="525"/>
    </location>
</feature>
<feature type="domain" description="GoLoco" evidence="1">
    <location>
        <begin position="424"/>
        <end position="445"/>
    </location>
</feature>
<feature type="region of interest" description="Disordered" evidence="2">
    <location>
        <begin position="488"/>
        <end position="525"/>
    </location>
</feature>
<gene>
    <name type="primary">gpr-1</name>
    <name type="ORF">F22B7.13</name>
</gene>
<reference key="1">
    <citation type="journal article" date="1994" name="Nature">
        <title>2.2 Mb of contiguous nucleotide sequence from chromosome III of C. elegans.</title>
        <authorList>
            <person name="Wilson R."/>
            <person name="Ainscough R."/>
            <person name="Anderson K."/>
            <person name="Baynes C."/>
            <person name="Berks M."/>
            <person name="Bonfield J."/>
            <person name="Burton J."/>
            <person name="Connell M."/>
            <person name="Copsey T."/>
            <person name="Cooper J."/>
            <person name="Coulson A."/>
            <person name="Craxton M."/>
            <person name="Dear S."/>
            <person name="Du Z."/>
            <person name="Durbin R."/>
            <person name="Favello A."/>
            <person name="Fraser A."/>
            <person name="Fulton L."/>
            <person name="Gardner A."/>
            <person name="Green P."/>
            <person name="Hawkins T."/>
            <person name="Hillier L."/>
            <person name="Jier M."/>
            <person name="Johnston L."/>
            <person name="Jones M."/>
            <person name="Kershaw J."/>
            <person name="Kirsten J."/>
            <person name="Laisster N."/>
            <person name="Latreille P."/>
            <person name="Lightning J."/>
            <person name="Lloyd C."/>
            <person name="Mortimore B."/>
            <person name="O'Callaghan M."/>
            <person name="Parsons J."/>
            <person name="Percy C."/>
            <person name="Rifken L."/>
            <person name="Roopra A."/>
            <person name="Saunders D."/>
            <person name="Shownkeen R."/>
            <person name="Sims M."/>
            <person name="Smaldon N."/>
            <person name="Smith A."/>
            <person name="Smith M."/>
            <person name="Sonnhammer E."/>
            <person name="Staden R."/>
            <person name="Sulston J."/>
            <person name="Thierry-Mieg J."/>
            <person name="Thomas K."/>
            <person name="Vaudin M."/>
            <person name="Vaughan K."/>
            <person name="Waterston R."/>
            <person name="Watson A."/>
            <person name="Weinstock L."/>
            <person name="Wilkinson-Sproat J."/>
            <person name="Wohldman P."/>
        </authorList>
    </citation>
    <scope>NUCLEOTIDE SEQUENCE [LARGE SCALE GENOMIC DNA]</scope>
    <source>
        <strain>Bristol N2</strain>
    </source>
</reference>
<reference key="2">
    <citation type="journal article" date="1998" name="Science">
        <title>Genome sequence of the nematode C. elegans: a platform for investigating biology.</title>
        <authorList>
            <consortium name="The C. elegans sequencing consortium"/>
        </authorList>
    </citation>
    <scope>NUCLEOTIDE SEQUENCE [LARGE SCALE GENOMIC DNA]</scope>
    <source>
        <strain>Bristol N2</strain>
    </source>
</reference>
<reference key="3">
    <citation type="journal article" date="2003" name="Development">
        <title>LET-99 opposes Galpha/GPR signaling to generate asymmetry for spindle positioning in response to PAR and MES-1/SRC-1 signaling.</title>
        <authorList>
            <person name="Tsou M.-F.B."/>
            <person name="Hayashi A."/>
            <person name="Rose L.S."/>
        </authorList>
    </citation>
    <scope>FUNCTION</scope>
    <scope>SUBCELLULAR LOCATION</scope>
    <scope>DISRUPTION PHENOTYPE</scope>
</reference>
<reference key="4">
    <citation type="journal article" date="2003" name="Genes Dev.">
        <title>A complex of LIN-5 and GPR proteins regulates G protein signaling and spindle function in C elegans.</title>
        <authorList>
            <person name="Srinivasan D.G."/>
            <person name="Fisk R.M."/>
            <person name="Xu H."/>
            <person name="van den Heuvel S."/>
        </authorList>
    </citation>
    <scope>FUNCTION</scope>
    <scope>INTERACTION WITH GPR-1; LIN-5 AND GOA-1</scope>
    <scope>SUBCELLULAR LOCATION</scope>
</reference>
<reference key="5">
    <citation type="journal article" date="2008" name="Dev. Cell">
        <title>A casein kinase 1 and PAR proteins regulate asymmetry of a PIP(2) synthesis enzyme for asymmetric spindle positioning.</title>
        <authorList>
            <person name="Panbianco C."/>
            <person name="Weinkove D."/>
            <person name="Zanin E."/>
            <person name="Jones D."/>
            <person name="Divecha N."/>
            <person name="Gotta M."/>
            <person name="Ahringer J."/>
        </authorList>
    </citation>
    <scope>SUBCELLULAR LOCATION</scope>
</reference>
<organism>
    <name type="scientific">Caenorhabditis elegans</name>
    <dbReference type="NCBI Taxonomy" id="6239"/>
    <lineage>
        <taxon>Eukaryota</taxon>
        <taxon>Metazoa</taxon>
        <taxon>Ecdysozoa</taxon>
        <taxon>Nematoda</taxon>
        <taxon>Chromadorea</taxon>
        <taxon>Rhabditida</taxon>
        <taxon>Rhabditina</taxon>
        <taxon>Rhabditomorpha</taxon>
        <taxon>Rhabditoidea</taxon>
        <taxon>Rhabditidae</taxon>
        <taxon>Peloderinae</taxon>
        <taxon>Caenorhabditis</taxon>
    </lineage>
</organism>
<protein>
    <recommendedName>
        <fullName>G-protein regulator 1</fullName>
    </recommendedName>
</protein>
<sequence>MDVSYYDGPKDEVAEAMLKSAVTAMRLGQYEDGKGRLEEIMEFGTSNFQLLGTIYMYYGRVCRHLNHDAKALEFFEHELNMFKLIFNYPEACDSTRRIVEQALKMGKFPKARRFAEDLIDYTSNKKNGEKYIGQARILFASVCLEGCERDVESNQDEKKKLLSICAEQIAAVKLFNENNTEGAVSETKIMLLEAKCLSLDEKYEESRRKYQECIDFAIKTDQFEAVHIAYYDKALYAETDLLFFIIRDLRSALFYATKFGKERDVVKYKSKLSEEMLRNGEFHEAYLYGLEALVSIRKLGLNEYIGDVLLTIAKCLIALGKRRQAAYFIILGSVLTINQNSFKLFYEQIDVAMNQERSETATDQDVCLAIDSSPDPTSSNDMINKFVVELEHATNVETWEMIVNGIIDDQKKPVAIEKKENEEPVDMMDLIFSMSSRMDDQRTELPAARFIPPRPVSSASKKTTKSHRILPGLRANWTKVQSMKFDGHTMNRILKRSKKSKSSLDSTNSMQGDDTRSDDVTMTSK</sequence>
<evidence type="ECO:0000255" key="1">
    <source>
        <dbReference type="PROSITE-ProRule" id="PRU00097"/>
    </source>
</evidence>
<evidence type="ECO:0000256" key="2">
    <source>
        <dbReference type="SAM" id="MobiDB-lite"/>
    </source>
</evidence>
<evidence type="ECO:0000269" key="3">
    <source>
    </source>
</evidence>
<evidence type="ECO:0000269" key="4">
    <source>
    </source>
</evidence>
<evidence type="ECO:0000269" key="5">
    <source>
    </source>
</evidence>